<organism>
    <name type="scientific">Catharanthus roseus</name>
    <name type="common">Madagascar periwinkle</name>
    <name type="synonym">Vinca rosea</name>
    <dbReference type="NCBI Taxonomy" id="4058"/>
    <lineage>
        <taxon>Eukaryota</taxon>
        <taxon>Viridiplantae</taxon>
        <taxon>Streptophyta</taxon>
        <taxon>Embryophyta</taxon>
        <taxon>Tracheophyta</taxon>
        <taxon>Spermatophyta</taxon>
        <taxon>Magnoliopsida</taxon>
        <taxon>eudicotyledons</taxon>
        <taxon>Gunneridae</taxon>
        <taxon>Pentapetalae</taxon>
        <taxon>asterids</taxon>
        <taxon>lamiids</taxon>
        <taxon>Gentianales</taxon>
        <taxon>Apocynaceae</taxon>
        <taxon>Rauvolfioideae</taxon>
        <taxon>Vinceae</taxon>
        <taxon>Catharanthinae</taxon>
        <taxon>Catharanthus</taxon>
    </lineage>
</organism>
<name>7DLGT_CATRO</name>
<evidence type="ECO:0000250" key="1">
    <source>
        <dbReference type="UniProtKB" id="A0A0A1HA03"/>
    </source>
</evidence>
<evidence type="ECO:0000250" key="2">
    <source>
        <dbReference type="UniProtKB" id="P51094"/>
    </source>
</evidence>
<evidence type="ECO:0000269" key="3">
    <source>
    </source>
</evidence>
<evidence type="ECO:0000269" key="4">
    <source>
    </source>
</evidence>
<evidence type="ECO:0000303" key="5">
    <source>
    </source>
</evidence>
<evidence type="ECO:0000303" key="6">
    <source>
    </source>
</evidence>
<evidence type="ECO:0000305" key="7"/>
<reference key="1">
    <citation type="journal article" date="2013" name="Plant Cell">
        <title>A 7-deoxyloganetic Acid glucosyltransferase contributes a key step in secologanin biosynthesis in madagascar periwinkle.</title>
        <authorList>
            <person name="Asada K."/>
            <person name="Salim V."/>
            <person name="Masada-Atsumi S."/>
            <person name="Edmunds E."/>
            <person name="Nagatoshi M."/>
            <person name="Terasaka K."/>
            <person name="Mizukami H."/>
            <person name="De Luca V."/>
        </authorList>
    </citation>
    <scope>NUCLEOTIDE SEQUENCE [MRNA]</scope>
    <scope>FUNCTION</scope>
    <scope>DISRUPTION PHENOTYPE</scope>
    <scope>CATALYTIC ACTIVITY</scope>
    <scope>PATHWAY</scope>
    <scope>TISSUE SPECIFICITY</scope>
    <scope>BIOPHYSICOCHEMICAL PROPERTIES</scope>
    <scope>DEVELOPMENTAL STAGE</scope>
    <source>
        <strain>cv. Little Delicata</strain>
    </source>
</reference>
<reference key="2">
    <citation type="journal article" date="2014" name="Nat. Commun.">
        <title>The seco-iridoid pathway from Catharanthus roseus.</title>
        <authorList>
            <person name="Miettinen K."/>
            <person name="Dong L."/>
            <person name="Navrot N."/>
            <person name="Schneider T."/>
            <person name="Burlat V."/>
            <person name="Pollier J."/>
            <person name="Woittiez L."/>
            <person name="van der Krol S."/>
            <person name="Lugan R."/>
            <person name="Ilc T."/>
            <person name="Verpoorte R."/>
            <person name="Oksman-Caldentey K.M."/>
            <person name="Martinoia E."/>
            <person name="Bouwmeester H."/>
            <person name="Goossens A."/>
            <person name="Memelink J."/>
            <person name="Werck-Reichhart D."/>
        </authorList>
    </citation>
    <scope>NUCLEOTIDE SEQUENCE [MRNA]</scope>
    <scope>FUNCTION</scope>
    <scope>CATALYTIC ACTIVITY</scope>
    <scope>SUBCELLULAR LOCATION</scope>
    <scope>INDUCTION BY JASMONIC ACID</scope>
    <scope>PATHWAY</scope>
    <scope>BIOPHYSICOCHEMICAL PROPERTIES</scope>
    <source>
        <strain>cv. Little Bright Eyes</strain>
    </source>
</reference>
<feature type="chain" id="PRO_0000446418" description="7-deoxyloganetic acid glucosyl transferase">
    <location>
        <begin position="1"/>
        <end position="482"/>
    </location>
</feature>
<feature type="active site" description="Proton acceptor" evidence="1">
    <location>
        <position position="22"/>
    </location>
</feature>
<feature type="active site" description="Charge relay" evidence="1">
    <location>
        <position position="127"/>
    </location>
</feature>
<feature type="binding site" evidence="2">
    <location>
        <position position="22"/>
    </location>
    <ligand>
        <name>an anthocyanidin</name>
        <dbReference type="ChEBI" id="CHEBI:143576"/>
    </ligand>
</feature>
<feature type="binding site" evidence="1">
    <location>
        <position position="149"/>
    </location>
    <ligand>
        <name>UDP-alpha-D-glucose</name>
        <dbReference type="ChEBI" id="CHEBI:58885"/>
    </ligand>
</feature>
<feature type="binding site" evidence="1">
    <location>
        <position position="362"/>
    </location>
    <ligand>
        <name>UDP-alpha-D-glucose</name>
        <dbReference type="ChEBI" id="CHEBI:58885"/>
    </ligand>
</feature>
<feature type="binding site" evidence="1">
    <location>
        <position position="364"/>
    </location>
    <ligand>
        <name>UDP-alpha-D-glucose</name>
        <dbReference type="ChEBI" id="CHEBI:58885"/>
    </ligand>
</feature>
<feature type="binding site" evidence="1">
    <location>
        <position position="379"/>
    </location>
    <ligand>
        <name>UDP-alpha-D-glucose</name>
        <dbReference type="ChEBI" id="CHEBI:58885"/>
    </ligand>
</feature>
<feature type="binding site" evidence="1">
    <location>
        <position position="382"/>
    </location>
    <ligand>
        <name>UDP-alpha-D-glucose</name>
        <dbReference type="ChEBI" id="CHEBI:58885"/>
    </ligand>
</feature>
<feature type="binding site" evidence="1">
    <location>
        <position position="383"/>
    </location>
    <ligand>
        <name>UDP-alpha-D-glucose</name>
        <dbReference type="ChEBI" id="CHEBI:58885"/>
    </ligand>
</feature>
<feature type="binding site" evidence="1">
    <location>
        <position position="384"/>
    </location>
    <ligand>
        <name>UDP-alpha-D-glucose</name>
        <dbReference type="ChEBI" id="CHEBI:58885"/>
    </ligand>
</feature>
<feature type="binding site" evidence="1">
    <location>
        <position position="387"/>
    </location>
    <ligand>
        <name>UDP-alpha-D-glucose</name>
        <dbReference type="ChEBI" id="CHEBI:58885"/>
    </ligand>
</feature>
<feature type="binding site" evidence="2">
    <location>
        <position position="402"/>
    </location>
    <ligand>
        <name>an anthocyanidin</name>
        <dbReference type="ChEBI" id="CHEBI:143576"/>
    </ligand>
</feature>
<feature type="binding site" evidence="1">
    <location>
        <position position="403"/>
    </location>
    <ligand>
        <name>UDP-alpha-D-glucose</name>
        <dbReference type="ChEBI" id="CHEBI:58885"/>
    </ligand>
</feature>
<feature type="binding site" evidence="1">
    <location>
        <position position="404"/>
    </location>
    <ligand>
        <name>UDP-alpha-D-glucose</name>
        <dbReference type="ChEBI" id="CHEBI:58885"/>
    </ligand>
</feature>
<sequence length="482" mass="54271">MGSQETNLPPHVLIFPLPIQGHVNSMLRLAELLCLAELDITFIVSEFSHSRLIKHTNVASRFARYPGFQFQPISDGLPDDHPRAGERVMDILPSTKNVTGPLFKQMMVENKCFSSATRRPITCIIADGVLSFAGDFAQEKGIPLIYFRTVSACSFWACFCMPELIESGDIPIKGNGMDLIVKSVPGMETFLRRRDLPGFCRVNDINEPKLQILKTETRQTTRAQAAILNTFEDLEGPILSQIRKHMPRLFTIGPSHSHLTSRLETKNIKTLISSGSFWEEDRSCVDWLDAQPPRSVLYVSFGSITVVTRDQLLEFWYGLVNSGQRFLWVMRPDSIMGKDGQSQIPADLEEGTKARGYMVGWAPQEEVLNHPAIGGFLTHSGWNSTLESIVAGVPMICWPYFADQMINSRFVSEIWKIGLDMKDTCDRETIVKMVRELMEIRKDEFLQRADHMAKLAKEAVSEGGSSYSNLDGLVDYIKSLII</sequence>
<protein>
    <recommendedName>
        <fullName evidence="5 6">7-deoxyloganetic acid glucosyl transferase</fullName>
        <shortName evidence="5 6">7-DLGT</shortName>
        <shortName evidence="5 6">Cr7DLGT</shortName>
        <ecNumber evidence="3 4">2.4.1.323</ecNumber>
    </recommendedName>
    <alternativeName>
        <fullName evidence="6">UDP glycosyltransferase 709C2</fullName>
    </alternativeName>
    <alternativeName>
        <fullName evidence="5">UDP-sugar glycosyltransferase 8</fullName>
        <shortName evidence="5">Cr-UGT8</shortName>
    </alternativeName>
</protein>
<accession>U5NH37</accession>
<proteinExistence type="evidence at protein level"/>
<keyword id="KW-0963">Cytoplasm</keyword>
<keyword id="KW-0328">Glycosyltransferase</keyword>
<keyword id="KW-0539">Nucleus</keyword>
<keyword id="KW-0808">Transferase</keyword>
<dbReference type="EC" id="2.4.1.323" evidence="3 4"/>
<dbReference type="EMBL" id="KF415118">
    <property type="protein sequence ID" value="AGX93065.1"/>
    <property type="molecule type" value="mRNA"/>
</dbReference>
<dbReference type="EMBL" id="KF302068">
    <property type="protein sequence ID" value="AHK60835.1"/>
    <property type="molecule type" value="mRNA"/>
</dbReference>
<dbReference type="SMR" id="U5NH37"/>
<dbReference type="OrthoDB" id="5835829at2759"/>
<dbReference type="GO" id="GO:0005829">
    <property type="term" value="C:cytosol"/>
    <property type="evidence" value="ECO:0007669"/>
    <property type="project" value="UniProtKB-SubCell"/>
</dbReference>
<dbReference type="GO" id="GO:0005634">
    <property type="term" value="C:nucleus"/>
    <property type="evidence" value="ECO:0007669"/>
    <property type="project" value="UniProtKB-SubCell"/>
</dbReference>
<dbReference type="GO" id="GO:0102970">
    <property type="term" value="F:7-deoxyloganetic acid glucosyltransferase activity"/>
    <property type="evidence" value="ECO:0007669"/>
    <property type="project" value="UniProtKB-EC"/>
</dbReference>
<dbReference type="GO" id="GO:0080043">
    <property type="term" value="F:quercetin 3-O-glucosyltransferase activity"/>
    <property type="evidence" value="ECO:0007669"/>
    <property type="project" value="TreeGrafter"/>
</dbReference>
<dbReference type="GO" id="GO:0080044">
    <property type="term" value="F:quercetin 7-O-glucosyltransferase activity"/>
    <property type="evidence" value="ECO:0007669"/>
    <property type="project" value="TreeGrafter"/>
</dbReference>
<dbReference type="CDD" id="cd03784">
    <property type="entry name" value="GT1_Gtf-like"/>
    <property type="match status" value="1"/>
</dbReference>
<dbReference type="FunFam" id="3.40.50.2000:FF:000065">
    <property type="entry name" value="Glycosyltransferase"/>
    <property type="match status" value="1"/>
</dbReference>
<dbReference type="FunFam" id="3.40.50.2000:FF:000040">
    <property type="entry name" value="UDP-glycosyltransferase 76C1"/>
    <property type="match status" value="1"/>
</dbReference>
<dbReference type="Gene3D" id="3.40.50.2000">
    <property type="entry name" value="Glycogen Phosphorylase B"/>
    <property type="match status" value="2"/>
</dbReference>
<dbReference type="InterPro" id="IPR002213">
    <property type="entry name" value="UDP_glucos_trans"/>
</dbReference>
<dbReference type="InterPro" id="IPR035595">
    <property type="entry name" value="UDP_glycos_trans_CS"/>
</dbReference>
<dbReference type="PANTHER" id="PTHR11926">
    <property type="entry name" value="GLUCOSYL/GLUCURONOSYL TRANSFERASES"/>
    <property type="match status" value="1"/>
</dbReference>
<dbReference type="PANTHER" id="PTHR11926:SF1392">
    <property type="entry name" value="GLYCOSYLTRANSFERASE"/>
    <property type="match status" value="1"/>
</dbReference>
<dbReference type="Pfam" id="PF00201">
    <property type="entry name" value="UDPGT"/>
    <property type="match status" value="1"/>
</dbReference>
<dbReference type="SUPFAM" id="SSF53756">
    <property type="entry name" value="UDP-Glycosyltransferase/glycogen phosphorylase"/>
    <property type="match status" value="1"/>
</dbReference>
<dbReference type="PROSITE" id="PS00375">
    <property type="entry name" value="UDPGT"/>
    <property type="match status" value="1"/>
</dbReference>
<gene>
    <name evidence="5 6" type="primary">7DLGT</name>
    <name evidence="6" type="synonym">UGT709C2</name>
    <name evidence="5" type="synonym">UGT8</name>
    <name evidence="6" type="ORF">Caros009839</name>
</gene>
<comment type="function">
    <text evidence="3 4">Component of the seco-iridoid and derivatives monoterpenoid indole alkaloids (MIAs, e.g. vincristine, quinine, and strychnine) biosynthesis pathway (PubMed:24710322). Catalyzes the glucosylation of 7-deoxyloganetic acid to form 7-deoxyloganic acid using UDP-glucose as the sugar donor (PubMed:24104568, PubMed:24710322). Inactive with loganetic acid, loganetin, iridodial, iridotrial, 8-OH-geraniol, jasmonic acid, gibberellic acid, indole acetic acid, salicylic acid, abscisic acid, zeatin and luteolin (PubMed:24710322).</text>
</comment>
<comment type="catalytic activity">
    <reaction evidence="3 4">
        <text>7-deoxyloganetate + UDP-alpha-D-glucose = 7-deoxyloganate + UDP + H(+)</text>
        <dbReference type="Rhea" id="RHEA:39895"/>
        <dbReference type="ChEBI" id="CHEBI:15378"/>
        <dbReference type="ChEBI" id="CHEBI:58223"/>
        <dbReference type="ChEBI" id="CHEBI:58885"/>
        <dbReference type="ChEBI" id="CHEBI:76844"/>
        <dbReference type="ChEBI" id="CHEBI:76846"/>
        <dbReference type="EC" id="2.4.1.323"/>
    </reaction>
</comment>
<comment type="biophysicochemical properties">
    <kinetics>
        <KM evidence="3">0.088 mM for 7-deoxyloganetic acid</KM>
        <KM evidence="3">5.38 mM for UDP-glucose</KM>
        <text evidence="3 4">kcat is 0.130 sec(-1) with 7-deoxyloganetic acid as substrate. kcat is 0.325 sec(-1) with UDP-glucose as substrate (PubMed:24104568). kcat is 1.25 sec(-1) with 7-deoxyloganetic acid as substrate (PubMed:24710322).</text>
    </kinetics>
</comment>
<comment type="pathway">
    <text evidence="3 4">Alkaloid biosynthesis.</text>
</comment>
<comment type="subcellular location">
    <subcellularLocation>
        <location evidence="4">Nucleus</location>
    </subcellularLocation>
    <subcellularLocation>
        <location evidence="4">Cytoplasm</location>
        <location evidence="4">Cytosol</location>
    </subcellularLocation>
</comment>
<comment type="tissue specificity">
    <text evidence="3">Expressed in the leaf internal phloem-associated parenchyma (IPAP) inside the mesophyll. Mostly observed in leaves, roots and stems, and, to a lower extent, in flowers.</text>
</comment>
<comment type="developmental stage">
    <text evidence="3">Highly expressed in the youngest leaves, and levels gradually decrease in the older leaves.</text>
</comment>
<comment type="induction">
    <text evidence="4">By jasmonic acid (MeJA).</text>
</comment>
<comment type="disruption phenotype">
    <text evidence="3">Large decline in secologanin and monoterpene indole alkaloids (MIAs) accumulation.</text>
</comment>
<comment type="similarity">
    <text evidence="7">Belongs to the UDP-glycosyltransferase family.</text>
</comment>
<comment type="online information" name="ORCAE database">
    <link uri="https://orcae.psb.ugent.be/taxa/catro/regular/v1/"/>
</comment>